<accession>Q39EA2</accession>
<sequence length="216" mass="24003">MKQDSRFPNLFITDHPLIQHKLTHMRDKDTSTRTFRELLREITLLMGYEITRNLPITTKRVETPLVEVDAPVIAGKKLAIVPVLRAGIGMSDGLLDLVPSARVGHIGVYRADDHRPVEYLVRLPDLEDRIFILCDPMVATGYSAVHAVDVLKRRNVPAANIMFVALVAAPEGVQVFQDAHPDVKLFVASLDSHLNEHAYIVPGLGDAGDRLFGTKN</sequence>
<organism>
    <name type="scientific">Burkholderia lata (strain ATCC 17760 / DSM 23089 / LMG 22485 / NCIMB 9086 / R18194 / 383)</name>
    <dbReference type="NCBI Taxonomy" id="482957"/>
    <lineage>
        <taxon>Bacteria</taxon>
        <taxon>Pseudomonadati</taxon>
        <taxon>Pseudomonadota</taxon>
        <taxon>Betaproteobacteria</taxon>
        <taxon>Burkholderiales</taxon>
        <taxon>Burkholderiaceae</taxon>
        <taxon>Burkholderia</taxon>
        <taxon>Burkholderia cepacia complex</taxon>
    </lineage>
</organism>
<comment type="function">
    <text evidence="1">Catalyzes the conversion of uracil and 5-phospho-alpha-D-ribose 1-diphosphate (PRPP) to UMP and diphosphate.</text>
</comment>
<comment type="catalytic activity">
    <reaction evidence="1">
        <text>UMP + diphosphate = 5-phospho-alpha-D-ribose 1-diphosphate + uracil</text>
        <dbReference type="Rhea" id="RHEA:13017"/>
        <dbReference type="ChEBI" id="CHEBI:17568"/>
        <dbReference type="ChEBI" id="CHEBI:33019"/>
        <dbReference type="ChEBI" id="CHEBI:57865"/>
        <dbReference type="ChEBI" id="CHEBI:58017"/>
        <dbReference type="EC" id="2.4.2.9"/>
    </reaction>
</comment>
<comment type="cofactor">
    <cofactor evidence="1">
        <name>Mg(2+)</name>
        <dbReference type="ChEBI" id="CHEBI:18420"/>
    </cofactor>
    <text evidence="1">Binds 1 Mg(2+) ion per subunit. The magnesium is bound as Mg-PRPP.</text>
</comment>
<comment type="activity regulation">
    <text evidence="1">Allosterically activated by GTP.</text>
</comment>
<comment type="pathway">
    <text evidence="1">Pyrimidine metabolism; UMP biosynthesis via salvage pathway; UMP from uracil: step 1/1.</text>
</comment>
<comment type="similarity">
    <text evidence="1">Belongs to the UPRTase family.</text>
</comment>
<proteinExistence type="inferred from homology"/>
<gene>
    <name evidence="1" type="primary">upp</name>
    <name type="ordered locus">Bcep18194_A5620</name>
</gene>
<evidence type="ECO:0000255" key="1">
    <source>
        <dbReference type="HAMAP-Rule" id="MF_01218"/>
    </source>
</evidence>
<keyword id="KW-0021">Allosteric enzyme</keyword>
<keyword id="KW-0328">Glycosyltransferase</keyword>
<keyword id="KW-0342">GTP-binding</keyword>
<keyword id="KW-0460">Magnesium</keyword>
<keyword id="KW-0547">Nucleotide-binding</keyword>
<keyword id="KW-0808">Transferase</keyword>
<name>UPP_BURL3</name>
<protein>
    <recommendedName>
        <fullName evidence="1">Uracil phosphoribosyltransferase</fullName>
        <ecNumber evidence="1">2.4.2.9</ecNumber>
    </recommendedName>
    <alternativeName>
        <fullName evidence="1">UMP pyrophosphorylase</fullName>
    </alternativeName>
    <alternativeName>
        <fullName evidence="1">UPRTase</fullName>
    </alternativeName>
</protein>
<reference key="1">
    <citation type="submission" date="2005-10" db="EMBL/GenBank/DDBJ databases">
        <title>Complete sequence of chromosome 1 of Burkholderia sp. 383.</title>
        <authorList>
            <consortium name="US DOE Joint Genome Institute"/>
            <person name="Copeland A."/>
            <person name="Lucas S."/>
            <person name="Lapidus A."/>
            <person name="Barry K."/>
            <person name="Detter J.C."/>
            <person name="Glavina T."/>
            <person name="Hammon N."/>
            <person name="Israni S."/>
            <person name="Pitluck S."/>
            <person name="Chain P."/>
            <person name="Malfatti S."/>
            <person name="Shin M."/>
            <person name="Vergez L."/>
            <person name="Schmutz J."/>
            <person name="Larimer F."/>
            <person name="Land M."/>
            <person name="Kyrpides N."/>
            <person name="Lykidis A."/>
            <person name="Richardson P."/>
        </authorList>
    </citation>
    <scope>NUCLEOTIDE SEQUENCE [LARGE SCALE GENOMIC DNA]</scope>
    <source>
        <strain>ATCC 17760 / DSM 23089 / LMG 22485 / NCIMB 9086 / R18194 / 383</strain>
    </source>
</reference>
<feature type="chain" id="PRO_1000053690" description="Uracil phosphoribosyltransferase">
    <location>
        <begin position="1"/>
        <end position="216"/>
    </location>
</feature>
<feature type="binding site" evidence="1">
    <location>
        <position position="85"/>
    </location>
    <ligand>
        <name>5-phospho-alpha-D-ribose 1-diphosphate</name>
        <dbReference type="ChEBI" id="CHEBI:58017"/>
    </ligand>
</feature>
<feature type="binding site" evidence="1">
    <location>
        <position position="110"/>
    </location>
    <ligand>
        <name>5-phospho-alpha-D-ribose 1-diphosphate</name>
        <dbReference type="ChEBI" id="CHEBI:58017"/>
    </ligand>
</feature>
<feature type="binding site" evidence="1">
    <location>
        <begin position="135"/>
        <end position="143"/>
    </location>
    <ligand>
        <name>5-phospho-alpha-D-ribose 1-diphosphate</name>
        <dbReference type="ChEBI" id="CHEBI:58017"/>
    </ligand>
</feature>
<feature type="binding site" evidence="1">
    <location>
        <position position="200"/>
    </location>
    <ligand>
        <name>uracil</name>
        <dbReference type="ChEBI" id="CHEBI:17568"/>
    </ligand>
</feature>
<feature type="binding site" evidence="1">
    <location>
        <begin position="205"/>
        <end position="207"/>
    </location>
    <ligand>
        <name>uracil</name>
        <dbReference type="ChEBI" id="CHEBI:17568"/>
    </ligand>
</feature>
<feature type="binding site" evidence="1">
    <location>
        <position position="206"/>
    </location>
    <ligand>
        <name>5-phospho-alpha-D-ribose 1-diphosphate</name>
        <dbReference type="ChEBI" id="CHEBI:58017"/>
    </ligand>
</feature>
<dbReference type="EC" id="2.4.2.9" evidence="1"/>
<dbReference type="EMBL" id="CP000151">
    <property type="protein sequence ID" value="ABB09214.1"/>
    <property type="molecule type" value="Genomic_DNA"/>
</dbReference>
<dbReference type="RefSeq" id="WP_011352740.1">
    <property type="nucleotide sequence ID" value="NZ_WNDV01000008.1"/>
</dbReference>
<dbReference type="SMR" id="Q39EA2"/>
<dbReference type="GeneID" id="93191264"/>
<dbReference type="KEGG" id="bur:Bcep18194_A5620"/>
<dbReference type="HOGENOM" id="CLU_067096_2_2_4"/>
<dbReference type="UniPathway" id="UPA00574">
    <property type="reaction ID" value="UER00636"/>
</dbReference>
<dbReference type="Proteomes" id="UP000002705">
    <property type="component" value="Chromosome 1"/>
</dbReference>
<dbReference type="GO" id="GO:0005525">
    <property type="term" value="F:GTP binding"/>
    <property type="evidence" value="ECO:0007669"/>
    <property type="project" value="UniProtKB-KW"/>
</dbReference>
<dbReference type="GO" id="GO:0000287">
    <property type="term" value="F:magnesium ion binding"/>
    <property type="evidence" value="ECO:0007669"/>
    <property type="project" value="UniProtKB-UniRule"/>
</dbReference>
<dbReference type="GO" id="GO:0004845">
    <property type="term" value="F:uracil phosphoribosyltransferase activity"/>
    <property type="evidence" value="ECO:0007669"/>
    <property type="project" value="UniProtKB-UniRule"/>
</dbReference>
<dbReference type="GO" id="GO:0044206">
    <property type="term" value="P:UMP salvage"/>
    <property type="evidence" value="ECO:0007669"/>
    <property type="project" value="UniProtKB-UniRule"/>
</dbReference>
<dbReference type="GO" id="GO:0006223">
    <property type="term" value="P:uracil salvage"/>
    <property type="evidence" value="ECO:0007669"/>
    <property type="project" value="InterPro"/>
</dbReference>
<dbReference type="CDD" id="cd06223">
    <property type="entry name" value="PRTases_typeI"/>
    <property type="match status" value="1"/>
</dbReference>
<dbReference type="FunFam" id="3.40.50.2020:FF:000003">
    <property type="entry name" value="Uracil phosphoribosyltransferase"/>
    <property type="match status" value="1"/>
</dbReference>
<dbReference type="Gene3D" id="3.40.50.2020">
    <property type="match status" value="1"/>
</dbReference>
<dbReference type="HAMAP" id="MF_01218_B">
    <property type="entry name" value="Upp_B"/>
    <property type="match status" value="1"/>
</dbReference>
<dbReference type="InterPro" id="IPR000836">
    <property type="entry name" value="PRibTrfase_dom"/>
</dbReference>
<dbReference type="InterPro" id="IPR029057">
    <property type="entry name" value="PRTase-like"/>
</dbReference>
<dbReference type="InterPro" id="IPR034332">
    <property type="entry name" value="Upp_B"/>
</dbReference>
<dbReference type="InterPro" id="IPR050054">
    <property type="entry name" value="UPRTase/APRTase"/>
</dbReference>
<dbReference type="InterPro" id="IPR005765">
    <property type="entry name" value="Ura_phspho_trans"/>
</dbReference>
<dbReference type="NCBIfam" id="NF001097">
    <property type="entry name" value="PRK00129.1"/>
    <property type="match status" value="1"/>
</dbReference>
<dbReference type="NCBIfam" id="TIGR01091">
    <property type="entry name" value="upp"/>
    <property type="match status" value="1"/>
</dbReference>
<dbReference type="PANTHER" id="PTHR32315">
    <property type="entry name" value="ADENINE PHOSPHORIBOSYLTRANSFERASE"/>
    <property type="match status" value="1"/>
</dbReference>
<dbReference type="PANTHER" id="PTHR32315:SF4">
    <property type="entry name" value="URACIL PHOSPHORIBOSYLTRANSFERASE, CHLOROPLASTIC"/>
    <property type="match status" value="1"/>
</dbReference>
<dbReference type="Pfam" id="PF14681">
    <property type="entry name" value="UPRTase"/>
    <property type="match status" value="1"/>
</dbReference>
<dbReference type="SUPFAM" id="SSF53271">
    <property type="entry name" value="PRTase-like"/>
    <property type="match status" value="1"/>
</dbReference>